<evidence type="ECO:0000255" key="1">
    <source>
        <dbReference type="HAMAP-Rule" id="MF_01263"/>
    </source>
</evidence>
<reference key="1">
    <citation type="journal article" date="2004" name="Nucleic Acids Res.">
        <title>Thermoadaptation trait revealed by the genome sequence of thermophilic Geobacillus kaustophilus.</title>
        <authorList>
            <person name="Takami H."/>
            <person name="Takaki Y."/>
            <person name="Chee G.-J."/>
            <person name="Nishi S."/>
            <person name="Shimamura S."/>
            <person name="Suzuki H."/>
            <person name="Matsui S."/>
            <person name="Uchiyama I."/>
        </authorList>
    </citation>
    <scope>NUCLEOTIDE SEQUENCE [LARGE SCALE GENOMIC DNA]</scope>
    <source>
        <strain>HTA426</strain>
    </source>
</reference>
<name>CCA_GEOKA</name>
<gene>
    <name evidence="1" type="primary">cca</name>
    <name type="ordered locus">GK2181</name>
</gene>
<sequence length="404" mass="45483">MKPPFEQALGIIRQLKRHGYEAYFVGGAVRDLLIGRAIGDVDIATSALPEEVMRLFPKTIDVGSKHGTVVVVHEGTAYEVTTFRTDGDYEDHRRPESVTFVRSLEEDLKRRDFTMNAIAMDERGTIIDPFGGQEAIERRLICTVGAADERFREDALRMMRAVRFVSQLGFALSEDTKSAIVQNAPLMAHISVERMTMEMEKLLAGPFVAEALPLLADTGLFAYLPGLAAKVQLLRSAAAFRWPWLTKREERWALLCRALDVKDIRPFLRAWKLPNKVIDEAGAILAALDDVPRPEEWTNEQLFSAGLERALSVEAVRAALCGAPSEPHHEELRRRFAALPIKTKGELAVNGKDVIRWAGKPAGPWVKETLDAIWRAVVSSEVENEKERIYAWLMERNRTHEKNC</sequence>
<organism>
    <name type="scientific">Geobacillus kaustophilus (strain HTA426)</name>
    <dbReference type="NCBI Taxonomy" id="235909"/>
    <lineage>
        <taxon>Bacteria</taxon>
        <taxon>Bacillati</taxon>
        <taxon>Bacillota</taxon>
        <taxon>Bacilli</taxon>
        <taxon>Bacillales</taxon>
        <taxon>Anoxybacillaceae</taxon>
        <taxon>Geobacillus</taxon>
        <taxon>Geobacillus thermoleovorans group</taxon>
    </lineage>
</organism>
<dbReference type="EC" id="2.7.7.72" evidence="1"/>
<dbReference type="EMBL" id="BA000043">
    <property type="protein sequence ID" value="BAD76466.1"/>
    <property type="molecule type" value="Genomic_DNA"/>
</dbReference>
<dbReference type="RefSeq" id="WP_011231666.1">
    <property type="nucleotide sequence ID" value="NC_006510.1"/>
</dbReference>
<dbReference type="SMR" id="Q5KXX0"/>
<dbReference type="STRING" id="235909.GK2181"/>
<dbReference type="KEGG" id="gka:GK2181"/>
<dbReference type="PATRIC" id="fig|235909.7.peg.2336"/>
<dbReference type="eggNOG" id="COG0617">
    <property type="taxonomic scope" value="Bacteria"/>
</dbReference>
<dbReference type="HOGENOM" id="CLU_015961_3_0_9"/>
<dbReference type="Proteomes" id="UP000001172">
    <property type="component" value="Chromosome"/>
</dbReference>
<dbReference type="GO" id="GO:0005524">
    <property type="term" value="F:ATP binding"/>
    <property type="evidence" value="ECO:0007669"/>
    <property type="project" value="UniProtKB-UniRule"/>
</dbReference>
<dbReference type="GO" id="GO:0004810">
    <property type="term" value="F:CCA tRNA nucleotidyltransferase activity"/>
    <property type="evidence" value="ECO:0007669"/>
    <property type="project" value="UniProtKB-UniRule"/>
</dbReference>
<dbReference type="GO" id="GO:0000287">
    <property type="term" value="F:magnesium ion binding"/>
    <property type="evidence" value="ECO:0007669"/>
    <property type="project" value="UniProtKB-UniRule"/>
</dbReference>
<dbReference type="GO" id="GO:0000049">
    <property type="term" value="F:tRNA binding"/>
    <property type="evidence" value="ECO:0007669"/>
    <property type="project" value="UniProtKB-UniRule"/>
</dbReference>
<dbReference type="GO" id="GO:0042245">
    <property type="term" value="P:RNA repair"/>
    <property type="evidence" value="ECO:0007669"/>
    <property type="project" value="UniProtKB-KW"/>
</dbReference>
<dbReference type="GO" id="GO:0001680">
    <property type="term" value="P:tRNA 3'-terminal CCA addition"/>
    <property type="evidence" value="ECO:0007669"/>
    <property type="project" value="UniProtKB-UniRule"/>
</dbReference>
<dbReference type="CDD" id="cd05398">
    <property type="entry name" value="NT_ClassII-CCAase"/>
    <property type="match status" value="1"/>
</dbReference>
<dbReference type="Gene3D" id="1.10.110.30">
    <property type="match status" value="1"/>
</dbReference>
<dbReference type="Gene3D" id="1.10.246.80">
    <property type="match status" value="1"/>
</dbReference>
<dbReference type="Gene3D" id="1.20.58.560">
    <property type="match status" value="1"/>
</dbReference>
<dbReference type="Gene3D" id="3.30.460.10">
    <property type="entry name" value="Beta Polymerase, domain 2"/>
    <property type="match status" value="1"/>
</dbReference>
<dbReference type="HAMAP" id="MF_01263">
    <property type="entry name" value="CCA_bact_type3"/>
    <property type="match status" value="1"/>
</dbReference>
<dbReference type="InterPro" id="IPR050264">
    <property type="entry name" value="Bact_CCA-adding_enz_type3_sf"/>
</dbReference>
<dbReference type="InterPro" id="IPR032810">
    <property type="entry name" value="CCA-adding_enz_C"/>
</dbReference>
<dbReference type="InterPro" id="IPR023068">
    <property type="entry name" value="CCA-adding_enz_firmicutes"/>
</dbReference>
<dbReference type="InterPro" id="IPR043519">
    <property type="entry name" value="NT_sf"/>
</dbReference>
<dbReference type="InterPro" id="IPR002646">
    <property type="entry name" value="PolA_pol_head_dom"/>
</dbReference>
<dbReference type="InterPro" id="IPR032828">
    <property type="entry name" value="PolyA_RNA-bd"/>
</dbReference>
<dbReference type="NCBIfam" id="NF009814">
    <property type="entry name" value="PRK13299.1"/>
    <property type="match status" value="1"/>
</dbReference>
<dbReference type="PANTHER" id="PTHR46173">
    <property type="entry name" value="CCA TRNA NUCLEOTIDYLTRANSFERASE 1, MITOCHONDRIAL"/>
    <property type="match status" value="1"/>
</dbReference>
<dbReference type="PANTHER" id="PTHR46173:SF1">
    <property type="entry name" value="CCA TRNA NUCLEOTIDYLTRANSFERASE 1, MITOCHONDRIAL"/>
    <property type="match status" value="1"/>
</dbReference>
<dbReference type="Pfam" id="PF01743">
    <property type="entry name" value="PolyA_pol"/>
    <property type="match status" value="1"/>
</dbReference>
<dbReference type="Pfam" id="PF12627">
    <property type="entry name" value="PolyA_pol_RNAbd"/>
    <property type="match status" value="1"/>
</dbReference>
<dbReference type="Pfam" id="PF13735">
    <property type="entry name" value="tRNA_NucTran2_2"/>
    <property type="match status" value="1"/>
</dbReference>
<dbReference type="SUPFAM" id="SSF81301">
    <property type="entry name" value="Nucleotidyltransferase"/>
    <property type="match status" value="1"/>
</dbReference>
<dbReference type="SUPFAM" id="SSF81891">
    <property type="entry name" value="Poly A polymerase C-terminal region-like"/>
    <property type="match status" value="1"/>
</dbReference>
<accession>Q5KXX0</accession>
<feature type="chain" id="PRO_0000139036" description="CCA-adding enzyme">
    <location>
        <begin position="1"/>
        <end position="404"/>
    </location>
</feature>
<feature type="binding site" evidence="1">
    <location>
        <position position="27"/>
    </location>
    <ligand>
        <name>ATP</name>
        <dbReference type="ChEBI" id="CHEBI:30616"/>
    </ligand>
</feature>
<feature type="binding site" evidence="1">
    <location>
        <position position="27"/>
    </location>
    <ligand>
        <name>CTP</name>
        <dbReference type="ChEBI" id="CHEBI:37563"/>
    </ligand>
</feature>
<feature type="binding site" evidence="1">
    <location>
        <position position="30"/>
    </location>
    <ligand>
        <name>ATP</name>
        <dbReference type="ChEBI" id="CHEBI:30616"/>
    </ligand>
</feature>
<feature type="binding site" evidence="1">
    <location>
        <position position="30"/>
    </location>
    <ligand>
        <name>CTP</name>
        <dbReference type="ChEBI" id="CHEBI:37563"/>
    </ligand>
</feature>
<feature type="binding site" evidence="1">
    <location>
        <position position="40"/>
    </location>
    <ligand>
        <name>Mg(2+)</name>
        <dbReference type="ChEBI" id="CHEBI:18420"/>
    </ligand>
</feature>
<feature type="binding site" evidence="1">
    <location>
        <position position="42"/>
    </location>
    <ligand>
        <name>Mg(2+)</name>
        <dbReference type="ChEBI" id="CHEBI:18420"/>
    </ligand>
</feature>
<feature type="binding site" evidence="1">
    <location>
        <position position="111"/>
    </location>
    <ligand>
        <name>ATP</name>
        <dbReference type="ChEBI" id="CHEBI:30616"/>
    </ligand>
</feature>
<feature type="binding site" evidence="1">
    <location>
        <position position="111"/>
    </location>
    <ligand>
        <name>CTP</name>
        <dbReference type="ChEBI" id="CHEBI:37563"/>
    </ligand>
</feature>
<feature type="binding site" evidence="1">
    <location>
        <position position="154"/>
    </location>
    <ligand>
        <name>ATP</name>
        <dbReference type="ChEBI" id="CHEBI:30616"/>
    </ligand>
</feature>
<feature type="binding site" evidence="1">
    <location>
        <position position="154"/>
    </location>
    <ligand>
        <name>CTP</name>
        <dbReference type="ChEBI" id="CHEBI:37563"/>
    </ligand>
</feature>
<feature type="binding site" evidence="1">
    <location>
        <position position="157"/>
    </location>
    <ligand>
        <name>ATP</name>
        <dbReference type="ChEBI" id="CHEBI:30616"/>
    </ligand>
</feature>
<feature type="binding site" evidence="1">
    <location>
        <position position="157"/>
    </location>
    <ligand>
        <name>CTP</name>
        <dbReference type="ChEBI" id="CHEBI:37563"/>
    </ligand>
</feature>
<feature type="binding site" evidence="1">
    <location>
        <position position="160"/>
    </location>
    <ligand>
        <name>ATP</name>
        <dbReference type="ChEBI" id="CHEBI:30616"/>
    </ligand>
</feature>
<feature type="binding site" evidence="1">
    <location>
        <position position="160"/>
    </location>
    <ligand>
        <name>CTP</name>
        <dbReference type="ChEBI" id="CHEBI:37563"/>
    </ligand>
</feature>
<feature type="binding site" evidence="1">
    <location>
        <position position="163"/>
    </location>
    <ligand>
        <name>ATP</name>
        <dbReference type="ChEBI" id="CHEBI:30616"/>
    </ligand>
</feature>
<feature type="binding site" evidence="1">
    <location>
        <position position="163"/>
    </location>
    <ligand>
        <name>CTP</name>
        <dbReference type="ChEBI" id="CHEBI:37563"/>
    </ligand>
</feature>
<comment type="function">
    <text evidence="1">Catalyzes the addition and repair of the essential 3'-terminal CCA sequence in tRNAs without using a nucleic acid template. Adds these three nucleotides in the order of C, C, and A to the tRNA nucleotide-73, using CTP and ATP as substrates and producing inorganic pyrophosphate. tRNA 3'-terminal CCA addition is required both for tRNA processing and repair. Also involved in tRNA surveillance by mediating tandem CCA addition to generate a CCACCA at the 3' terminus of unstable tRNAs. While stable tRNAs receive only 3'-terminal CCA, unstable tRNAs are marked with CCACCA and rapidly degraded.</text>
</comment>
<comment type="catalytic activity">
    <reaction evidence="1">
        <text>a tRNA precursor + 2 CTP + ATP = a tRNA with a 3' CCA end + 3 diphosphate</text>
        <dbReference type="Rhea" id="RHEA:14433"/>
        <dbReference type="Rhea" id="RHEA-COMP:10465"/>
        <dbReference type="Rhea" id="RHEA-COMP:10468"/>
        <dbReference type="ChEBI" id="CHEBI:30616"/>
        <dbReference type="ChEBI" id="CHEBI:33019"/>
        <dbReference type="ChEBI" id="CHEBI:37563"/>
        <dbReference type="ChEBI" id="CHEBI:74896"/>
        <dbReference type="ChEBI" id="CHEBI:83071"/>
        <dbReference type="EC" id="2.7.7.72"/>
    </reaction>
</comment>
<comment type="catalytic activity">
    <reaction evidence="1">
        <text>a tRNA with a 3' CCA end + 2 CTP + ATP = a tRNA with a 3' CCACCA end + 3 diphosphate</text>
        <dbReference type="Rhea" id="RHEA:76235"/>
        <dbReference type="Rhea" id="RHEA-COMP:10468"/>
        <dbReference type="Rhea" id="RHEA-COMP:18655"/>
        <dbReference type="ChEBI" id="CHEBI:30616"/>
        <dbReference type="ChEBI" id="CHEBI:33019"/>
        <dbReference type="ChEBI" id="CHEBI:37563"/>
        <dbReference type="ChEBI" id="CHEBI:83071"/>
        <dbReference type="ChEBI" id="CHEBI:195187"/>
    </reaction>
    <physiologicalReaction direction="left-to-right" evidence="1">
        <dbReference type="Rhea" id="RHEA:76236"/>
    </physiologicalReaction>
</comment>
<comment type="cofactor">
    <cofactor evidence="1">
        <name>Mg(2+)</name>
        <dbReference type="ChEBI" id="CHEBI:18420"/>
    </cofactor>
</comment>
<comment type="subunit">
    <text evidence="1">Homodimer.</text>
</comment>
<comment type="miscellaneous">
    <text evidence="1">A single active site specifically recognizes both ATP and CTP and is responsible for their addition.</text>
</comment>
<comment type="similarity">
    <text evidence="1">Belongs to the tRNA nucleotidyltransferase/poly(A) polymerase family. Bacterial CCA-adding enzyme type 3 subfamily.</text>
</comment>
<keyword id="KW-0067">ATP-binding</keyword>
<keyword id="KW-0460">Magnesium</keyword>
<keyword id="KW-0479">Metal-binding</keyword>
<keyword id="KW-0547">Nucleotide-binding</keyword>
<keyword id="KW-0548">Nucleotidyltransferase</keyword>
<keyword id="KW-1185">Reference proteome</keyword>
<keyword id="KW-0692">RNA repair</keyword>
<keyword id="KW-0694">RNA-binding</keyword>
<keyword id="KW-0808">Transferase</keyword>
<keyword id="KW-0819">tRNA processing</keyword>
<protein>
    <recommendedName>
        <fullName evidence="1">CCA-adding enzyme</fullName>
        <ecNumber evidence="1">2.7.7.72</ecNumber>
    </recommendedName>
    <alternativeName>
        <fullName evidence="1">CCA tRNA nucleotidyltransferase</fullName>
    </alternativeName>
    <alternativeName>
        <fullName evidence="1">tRNA CCA-pyrophosphorylase</fullName>
    </alternativeName>
    <alternativeName>
        <fullName evidence="1">tRNA adenylyl-/cytidylyl- transferase</fullName>
    </alternativeName>
    <alternativeName>
        <fullName evidence="1">tRNA nucleotidyltransferase</fullName>
    </alternativeName>
    <alternativeName>
        <fullName evidence="1">tRNA-NT</fullName>
    </alternativeName>
</protein>
<proteinExistence type="inferred from homology"/>